<comment type="function">
    <text evidence="1">Required for association of the cohesin complex with chromatin during interphase. Plays a role in sister chromatid cohesion and normal progression through prometaphase (By similarity).</text>
</comment>
<comment type="subunit">
    <text evidence="1">Component of the cohesin loading complex.</text>
</comment>
<comment type="subcellular location">
    <subcellularLocation>
        <location evidence="1">Nucleus</location>
        <location evidence="1">Nucleoplasm</location>
    </subcellularLocation>
    <text evidence="1">Binds to chromatin from the end of mitosis until prophase.</text>
</comment>
<comment type="similarity">
    <text evidence="3">Belongs to the SCC4/mau-2 family.</text>
</comment>
<feature type="chain" id="PRO_0000382741" description="MAU2 chromatid cohesion factor homolog">
    <location>
        <begin position="1"/>
        <end position="611"/>
    </location>
</feature>
<feature type="repeat" description="TPR 1">
    <location>
        <begin position="11"/>
        <end position="46"/>
    </location>
</feature>
<feature type="repeat" description="TPR 2">
    <location>
        <begin position="91"/>
        <end position="124"/>
    </location>
</feature>
<feature type="repeat" description="TPR 3">
    <location>
        <begin position="131"/>
        <end position="164"/>
    </location>
</feature>
<feature type="repeat" description="TPR 4">
    <location>
        <begin position="371"/>
        <end position="404"/>
    </location>
</feature>
<feature type="repeat" description="TPR 5">
    <location>
        <begin position="490"/>
        <end position="523"/>
    </location>
</feature>
<feature type="region of interest" description="Disordered" evidence="2">
    <location>
        <begin position="581"/>
        <end position="611"/>
    </location>
</feature>
<feature type="compositionally biased region" description="Polar residues" evidence="2">
    <location>
        <begin position="585"/>
        <end position="611"/>
    </location>
</feature>
<sequence>MAVILSVDPCYAGLVGLAEGFRTSNPPRIRECIQCLQAILQFNPPPATQAKTHLQIGRILQQYTKNDDLARRTLEKAVSAELGHGYEEISFEASSILSLVYKDQGQYPLAKQVLRQALEITSGENLYFWQFRLFFQLAEVHACDNEFTASVEVLEMGERIAEQCGSQYMRYNIRHSHNCIIIVLLIMKDVNRVSNILMSTGSFLERWQGQSYQRESLVVFHLLLRVWQLLSVGQAKTVRPYLKQLQQSIQNLTTMTFEGMQPGPNVYEAEKFEWLPREHLCVLVYLVTVMHSMYAGYMDKVLKYSAKALNQVERLKVTSPSALVSVFQLMLLEHTIMCRVVQGQPAHAIKEISQVYQTLKHENCLVRAHKPILHTLLGLYAMSMNLMEQATTHFNIAFKTADNPVLANFVGLNLSIIYIRAGESKQIELSSVMSSIHPSNMATNSHSLQAGYYYVCALRAFFQTRIQDAKKYLRESLKIANAEDLNRLTACSLVLLGHTFLASGNPQEALNMVLPATQLSGKIPDNYIQLWAAGLLRDLYGMLGQPVQASESFHKHHSITKQLIENHMQARKLPEHGLTEWTGAVSPTKSSTIPPQQSFQTWSQPGPSRLS</sequence>
<proteinExistence type="inferred from homology"/>
<dbReference type="EMBL" id="DS469820">
    <property type="protein sequence ID" value="EDO32521.1"/>
    <property type="molecule type" value="Genomic_DNA"/>
</dbReference>
<dbReference type="RefSeq" id="XP_001624621.1">
    <property type="nucleotide sequence ID" value="XM_001624571.1"/>
</dbReference>
<dbReference type="STRING" id="45351.A7SUU7"/>
<dbReference type="EnsemblMetazoa" id="EDO32521">
    <property type="protein sequence ID" value="EDO32521"/>
    <property type="gene ID" value="NEMVEDRAFT_v1g174619"/>
</dbReference>
<dbReference type="eggNOG" id="KOG2300">
    <property type="taxonomic scope" value="Eukaryota"/>
</dbReference>
<dbReference type="HOGENOM" id="CLU_030238_0_0_1"/>
<dbReference type="InParanoid" id="A7SUU7"/>
<dbReference type="OMA" id="QDAWYLS"/>
<dbReference type="PhylomeDB" id="A7SUU7"/>
<dbReference type="Proteomes" id="UP000001593">
    <property type="component" value="Unassembled WGS sequence"/>
</dbReference>
<dbReference type="GO" id="GO:0000785">
    <property type="term" value="C:chromatin"/>
    <property type="evidence" value="ECO:0000250"/>
    <property type="project" value="UniProtKB"/>
</dbReference>
<dbReference type="GO" id="GO:0005654">
    <property type="term" value="C:nucleoplasm"/>
    <property type="evidence" value="ECO:0000250"/>
    <property type="project" value="UniProtKB"/>
</dbReference>
<dbReference type="GO" id="GO:0005634">
    <property type="term" value="C:nucleus"/>
    <property type="evidence" value="ECO:0000250"/>
    <property type="project" value="UniProtKB"/>
</dbReference>
<dbReference type="GO" id="GO:0032116">
    <property type="term" value="C:SMC loading complex"/>
    <property type="evidence" value="ECO:0000250"/>
    <property type="project" value="UniProtKB"/>
</dbReference>
<dbReference type="GO" id="GO:0051301">
    <property type="term" value="P:cell division"/>
    <property type="evidence" value="ECO:0007669"/>
    <property type="project" value="UniProtKB-KW"/>
</dbReference>
<dbReference type="GO" id="GO:0007059">
    <property type="term" value="P:chromosome segregation"/>
    <property type="evidence" value="ECO:0007669"/>
    <property type="project" value="UniProtKB-KW"/>
</dbReference>
<dbReference type="GO" id="GO:0034088">
    <property type="term" value="P:maintenance of mitotic sister chromatid cohesion"/>
    <property type="evidence" value="ECO:0000250"/>
    <property type="project" value="UniProtKB"/>
</dbReference>
<dbReference type="Gene3D" id="1.25.40.10">
    <property type="entry name" value="Tetratricopeptide repeat domain"/>
    <property type="match status" value="2"/>
</dbReference>
<dbReference type="InterPro" id="IPR019440">
    <property type="entry name" value="MAU2"/>
</dbReference>
<dbReference type="InterPro" id="IPR011990">
    <property type="entry name" value="TPR-like_helical_dom_sf"/>
</dbReference>
<dbReference type="PANTHER" id="PTHR21394">
    <property type="entry name" value="MAU2 CHROMATID COHESION FACTOR HOMOLOG"/>
    <property type="match status" value="1"/>
</dbReference>
<dbReference type="Pfam" id="PF10345">
    <property type="entry name" value="Cohesin_load"/>
    <property type="match status" value="1"/>
</dbReference>
<dbReference type="SUPFAM" id="SSF48452">
    <property type="entry name" value="TPR-like"/>
    <property type="match status" value="2"/>
</dbReference>
<protein>
    <recommendedName>
        <fullName>MAU2 chromatid cohesion factor homolog</fullName>
    </recommendedName>
    <alternativeName>
        <fullName>Cohesin loading complex subunit SCC4 homolog</fullName>
    </alternativeName>
</protein>
<evidence type="ECO:0000250" key="1"/>
<evidence type="ECO:0000256" key="2">
    <source>
        <dbReference type="SAM" id="MobiDB-lite"/>
    </source>
</evidence>
<evidence type="ECO:0000305" key="3"/>
<keyword id="KW-0131">Cell cycle</keyword>
<keyword id="KW-0132">Cell division</keyword>
<keyword id="KW-0159">Chromosome partition</keyword>
<keyword id="KW-0498">Mitosis</keyword>
<keyword id="KW-0539">Nucleus</keyword>
<keyword id="KW-1185">Reference proteome</keyword>
<keyword id="KW-0677">Repeat</keyword>
<keyword id="KW-0802">TPR repeat</keyword>
<name>SCC4_NEMVE</name>
<organism>
    <name type="scientific">Nematostella vectensis</name>
    <name type="common">Starlet sea anemone</name>
    <dbReference type="NCBI Taxonomy" id="45351"/>
    <lineage>
        <taxon>Eukaryota</taxon>
        <taxon>Metazoa</taxon>
        <taxon>Cnidaria</taxon>
        <taxon>Anthozoa</taxon>
        <taxon>Hexacorallia</taxon>
        <taxon>Actiniaria</taxon>
        <taxon>Edwardsiidae</taxon>
        <taxon>Nematostella</taxon>
    </lineage>
</organism>
<accession>A7SUU7</accession>
<reference key="1">
    <citation type="journal article" date="2007" name="Science">
        <title>Sea anemone genome reveals ancestral eumetazoan gene repertoire and genomic organization.</title>
        <authorList>
            <person name="Putnam N.H."/>
            <person name="Srivastava M."/>
            <person name="Hellsten U."/>
            <person name="Dirks B."/>
            <person name="Chapman J."/>
            <person name="Salamov A."/>
            <person name="Terry A."/>
            <person name="Shapiro H."/>
            <person name="Lindquist E."/>
            <person name="Kapitonov V.V."/>
            <person name="Jurka J."/>
            <person name="Genikhovich G."/>
            <person name="Grigoriev I.V."/>
            <person name="Lucas S.M."/>
            <person name="Steele R.E."/>
            <person name="Finnerty J.R."/>
            <person name="Technau U."/>
            <person name="Martindale M.Q."/>
            <person name="Rokhsar D.S."/>
        </authorList>
    </citation>
    <scope>NUCLEOTIDE SEQUENCE [LARGE SCALE GENOMIC DNA]</scope>
    <source>
        <strain>CH2 X CH6</strain>
    </source>
</reference>
<gene>
    <name type="ORF">v1g174619</name>
</gene>